<gene>
    <name evidence="1" type="primary">anmK</name>
    <name type="ordered locus">CPS_4725</name>
</gene>
<protein>
    <recommendedName>
        <fullName evidence="1">Anhydro-N-acetylmuramic acid kinase</fullName>
        <ecNumber evidence="1">2.7.1.170</ecNumber>
    </recommendedName>
    <alternativeName>
        <fullName evidence="1">AnhMurNAc kinase</fullName>
    </alternativeName>
</protein>
<evidence type="ECO:0000255" key="1">
    <source>
        <dbReference type="HAMAP-Rule" id="MF_01270"/>
    </source>
</evidence>
<name>ANMK_COLP3</name>
<organism>
    <name type="scientific">Colwellia psychrerythraea (strain 34H / ATCC BAA-681)</name>
    <name type="common">Vibrio psychroerythus</name>
    <dbReference type="NCBI Taxonomy" id="167879"/>
    <lineage>
        <taxon>Bacteria</taxon>
        <taxon>Pseudomonadati</taxon>
        <taxon>Pseudomonadota</taxon>
        <taxon>Gammaproteobacteria</taxon>
        <taxon>Alteromonadales</taxon>
        <taxon>Colwelliaceae</taxon>
        <taxon>Colwellia</taxon>
    </lineage>
</organism>
<accession>Q47V03</accession>
<keyword id="KW-0067">ATP-binding</keyword>
<keyword id="KW-0119">Carbohydrate metabolism</keyword>
<keyword id="KW-0418">Kinase</keyword>
<keyword id="KW-0547">Nucleotide-binding</keyword>
<keyword id="KW-0808">Transferase</keyword>
<dbReference type="EC" id="2.7.1.170" evidence="1"/>
<dbReference type="EMBL" id="CP000083">
    <property type="protein sequence ID" value="AAZ27705.1"/>
    <property type="molecule type" value="Genomic_DNA"/>
</dbReference>
<dbReference type="RefSeq" id="WP_011045450.1">
    <property type="nucleotide sequence ID" value="NC_003910.7"/>
</dbReference>
<dbReference type="SMR" id="Q47V03"/>
<dbReference type="STRING" id="167879.CPS_4725"/>
<dbReference type="KEGG" id="cps:CPS_4725"/>
<dbReference type="HOGENOM" id="CLU_038782_0_0_6"/>
<dbReference type="UniPathway" id="UPA00343"/>
<dbReference type="UniPathway" id="UPA00544"/>
<dbReference type="Proteomes" id="UP000000547">
    <property type="component" value="Chromosome"/>
</dbReference>
<dbReference type="GO" id="GO:0005524">
    <property type="term" value="F:ATP binding"/>
    <property type="evidence" value="ECO:0007669"/>
    <property type="project" value="UniProtKB-UniRule"/>
</dbReference>
<dbReference type="GO" id="GO:0016301">
    <property type="term" value="F:kinase activity"/>
    <property type="evidence" value="ECO:0007669"/>
    <property type="project" value="UniProtKB-KW"/>
</dbReference>
<dbReference type="GO" id="GO:0016773">
    <property type="term" value="F:phosphotransferase activity, alcohol group as acceptor"/>
    <property type="evidence" value="ECO:0007669"/>
    <property type="project" value="UniProtKB-UniRule"/>
</dbReference>
<dbReference type="GO" id="GO:0097175">
    <property type="term" value="P:1,6-anhydro-N-acetyl-beta-muramic acid catabolic process"/>
    <property type="evidence" value="ECO:0007669"/>
    <property type="project" value="UniProtKB-UniRule"/>
</dbReference>
<dbReference type="GO" id="GO:0006040">
    <property type="term" value="P:amino sugar metabolic process"/>
    <property type="evidence" value="ECO:0007669"/>
    <property type="project" value="InterPro"/>
</dbReference>
<dbReference type="GO" id="GO:0009254">
    <property type="term" value="P:peptidoglycan turnover"/>
    <property type="evidence" value="ECO:0007669"/>
    <property type="project" value="UniProtKB-UniRule"/>
</dbReference>
<dbReference type="CDD" id="cd24050">
    <property type="entry name" value="ASKHA_NBD_ANMK"/>
    <property type="match status" value="1"/>
</dbReference>
<dbReference type="Gene3D" id="3.30.420.40">
    <property type="match status" value="2"/>
</dbReference>
<dbReference type="HAMAP" id="MF_01270">
    <property type="entry name" value="AnhMurNAc_kinase"/>
    <property type="match status" value="1"/>
</dbReference>
<dbReference type="InterPro" id="IPR005338">
    <property type="entry name" value="Anhydro_N_Ac-Mur_kinase"/>
</dbReference>
<dbReference type="InterPro" id="IPR043129">
    <property type="entry name" value="ATPase_NBD"/>
</dbReference>
<dbReference type="NCBIfam" id="NF007139">
    <property type="entry name" value="PRK09585.1-3"/>
    <property type="match status" value="1"/>
</dbReference>
<dbReference type="PANTHER" id="PTHR30605">
    <property type="entry name" value="ANHYDRO-N-ACETYLMURAMIC ACID KINASE"/>
    <property type="match status" value="1"/>
</dbReference>
<dbReference type="PANTHER" id="PTHR30605:SF0">
    <property type="entry name" value="ANHYDRO-N-ACETYLMURAMIC ACID KINASE"/>
    <property type="match status" value="1"/>
</dbReference>
<dbReference type="Pfam" id="PF03702">
    <property type="entry name" value="AnmK"/>
    <property type="match status" value="1"/>
</dbReference>
<dbReference type="SUPFAM" id="SSF53067">
    <property type="entry name" value="Actin-like ATPase domain"/>
    <property type="match status" value="1"/>
</dbReference>
<feature type="chain" id="PRO_0000249994" description="Anhydro-N-acetylmuramic acid kinase">
    <location>
        <begin position="1"/>
        <end position="396"/>
    </location>
</feature>
<feature type="binding site" evidence="1">
    <location>
        <begin position="19"/>
        <end position="26"/>
    </location>
    <ligand>
        <name>ATP</name>
        <dbReference type="ChEBI" id="CHEBI:30616"/>
    </ligand>
</feature>
<reference key="1">
    <citation type="journal article" date="2005" name="Proc. Natl. Acad. Sci. U.S.A.">
        <title>The psychrophilic lifestyle as revealed by the genome sequence of Colwellia psychrerythraea 34H through genomic and proteomic analyses.</title>
        <authorList>
            <person name="Methe B.A."/>
            <person name="Nelson K.E."/>
            <person name="Deming J.W."/>
            <person name="Momen B."/>
            <person name="Melamud E."/>
            <person name="Zhang X."/>
            <person name="Moult J."/>
            <person name="Madupu R."/>
            <person name="Nelson W.C."/>
            <person name="Dodson R.J."/>
            <person name="Brinkac L.M."/>
            <person name="Daugherty S.C."/>
            <person name="Durkin A.S."/>
            <person name="DeBoy R.T."/>
            <person name="Kolonay J.F."/>
            <person name="Sullivan S.A."/>
            <person name="Zhou L."/>
            <person name="Davidsen T.M."/>
            <person name="Wu M."/>
            <person name="Huston A.L."/>
            <person name="Lewis M."/>
            <person name="Weaver B."/>
            <person name="Weidman J.F."/>
            <person name="Khouri H."/>
            <person name="Utterback T.R."/>
            <person name="Feldblyum T.V."/>
            <person name="Fraser C.M."/>
        </authorList>
    </citation>
    <scope>NUCLEOTIDE SEQUENCE [LARGE SCALE GENOMIC DNA]</scope>
    <source>
        <strain>34H / ATCC BAA-681</strain>
    </source>
</reference>
<proteinExistence type="inferred from homology"/>
<sequence>MINNKTVAEGRYYIGLMSGTSADGIDLALVDFTDKGQQPRLVASFYQSYSAIIADKITSLYQPGSNEIDRAFHLDVELAQLFSQAINALLNQEKLTPEDIIAIGNHGQTIRHRPSGDNPFTLQIGCCQTLATLTGIRVVGQFRRKDMALGGQGAPLVPIFHQQLFTQTTAANFVVNIGGIANITFLPTRDSNQAVLGFDTGPGNALLDDWFTKHHPNSDDCFDKNGAWATTGQVIPLLLEQLMQDDYINSAAPKSTGREYFHLEWLEQQLTAFKEATHSQHETVINHNADIQATLLAFTAQSISDAIMALTAQGKVYLCGGGVHNKALVEALSSRLTASDTVFEINTMQALNIDGDILEAMAFAWLAYAFDQGLDSNLPAVTGASASCTLGSAFLP</sequence>
<comment type="function">
    <text evidence="1">Catalyzes the specific phosphorylation of 1,6-anhydro-N-acetylmuramic acid (anhMurNAc) with the simultaneous cleavage of the 1,6-anhydro ring, generating MurNAc-6-P. Is required for the utilization of anhMurNAc either imported from the medium or derived from its own cell wall murein, and thus plays a role in cell wall recycling.</text>
</comment>
<comment type="catalytic activity">
    <reaction evidence="1">
        <text>1,6-anhydro-N-acetyl-beta-muramate + ATP + H2O = N-acetyl-D-muramate 6-phosphate + ADP + H(+)</text>
        <dbReference type="Rhea" id="RHEA:24952"/>
        <dbReference type="ChEBI" id="CHEBI:15377"/>
        <dbReference type="ChEBI" id="CHEBI:15378"/>
        <dbReference type="ChEBI" id="CHEBI:30616"/>
        <dbReference type="ChEBI" id="CHEBI:58690"/>
        <dbReference type="ChEBI" id="CHEBI:58722"/>
        <dbReference type="ChEBI" id="CHEBI:456216"/>
        <dbReference type="EC" id="2.7.1.170"/>
    </reaction>
</comment>
<comment type="pathway">
    <text evidence="1">Amino-sugar metabolism; 1,6-anhydro-N-acetylmuramate degradation.</text>
</comment>
<comment type="pathway">
    <text evidence="1">Cell wall biogenesis; peptidoglycan recycling.</text>
</comment>
<comment type="similarity">
    <text evidence="1">Belongs to the anhydro-N-acetylmuramic acid kinase family.</text>
</comment>